<accession>Q7NC69</accession>
<feature type="chain" id="PRO_0000101558" description="Ribosomal RNA small subunit methyltransferase A">
    <location>
        <begin position="1"/>
        <end position="268"/>
    </location>
</feature>
<feature type="binding site" evidence="1">
    <location>
        <position position="23"/>
    </location>
    <ligand>
        <name>S-adenosyl-L-methionine</name>
        <dbReference type="ChEBI" id="CHEBI:59789"/>
    </ligand>
</feature>
<feature type="binding site" evidence="1">
    <location>
        <position position="25"/>
    </location>
    <ligand>
        <name>S-adenosyl-L-methionine</name>
        <dbReference type="ChEBI" id="CHEBI:59789"/>
    </ligand>
</feature>
<feature type="binding site" evidence="1">
    <location>
        <position position="50"/>
    </location>
    <ligand>
        <name>S-adenosyl-L-methionine</name>
        <dbReference type="ChEBI" id="CHEBI:59789"/>
    </ligand>
</feature>
<feature type="binding site" evidence="1">
    <location>
        <position position="72"/>
    </location>
    <ligand>
        <name>S-adenosyl-L-methionine</name>
        <dbReference type="ChEBI" id="CHEBI:59789"/>
    </ligand>
</feature>
<feature type="binding site" evidence="1">
    <location>
        <position position="94"/>
    </location>
    <ligand>
        <name>S-adenosyl-L-methionine</name>
        <dbReference type="ChEBI" id="CHEBI:59789"/>
    </ligand>
</feature>
<feature type="binding site" evidence="1">
    <location>
        <position position="116"/>
    </location>
    <ligand>
        <name>S-adenosyl-L-methionine</name>
        <dbReference type="ChEBI" id="CHEBI:59789"/>
    </ligand>
</feature>
<reference key="1">
    <citation type="journal article" date="2003" name="Microbiology">
        <title>The complete genome sequence of the avian pathogen Mycoplasma gallisepticum strain R(low).</title>
        <authorList>
            <person name="Papazisi L."/>
            <person name="Gorton T.S."/>
            <person name="Kutish G."/>
            <person name="Markham P.F."/>
            <person name="Browning G.F."/>
            <person name="Nguyen D.K."/>
            <person name="Swartzell S."/>
            <person name="Madan A."/>
            <person name="Mahairas G."/>
            <person name="Geary S.J."/>
        </authorList>
    </citation>
    <scope>NUCLEOTIDE SEQUENCE [LARGE SCALE GENOMIC DNA]</scope>
    <source>
        <strain>R(low / passage 15 / clone 2)</strain>
    </source>
</reference>
<evidence type="ECO:0000255" key="1">
    <source>
        <dbReference type="HAMAP-Rule" id="MF_00607"/>
    </source>
</evidence>
<dbReference type="EC" id="2.1.1.182" evidence="1"/>
<dbReference type="EMBL" id="AE015450">
    <property type="protein sequence ID" value="AAP56360.2"/>
    <property type="molecule type" value="Genomic_DNA"/>
</dbReference>
<dbReference type="RefSeq" id="WP_011113239.1">
    <property type="nucleotide sequence ID" value="NC_004829.2"/>
</dbReference>
<dbReference type="SMR" id="Q7NC69"/>
<dbReference type="GeneID" id="93509831"/>
<dbReference type="KEGG" id="mga:MGA_0633"/>
<dbReference type="PATRIC" id="fig|233150.7.peg.12"/>
<dbReference type="HOGENOM" id="CLU_041220_0_2_14"/>
<dbReference type="OrthoDB" id="9814755at2"/>
<dbReference type="Proteomes" id="UP000001418">
    <property type="component" value="Chromosome"/>
</dbReference>
<dbReference type="GO" id="GO:0005829">
    <property type="term" value="C:cytosol"/>
    <property type="evidence" value="ECO:0007669"/>
    <property type="project" value="TreeGrafter"/>
</dbReference>
<dbReference type="GO" id="GO:0052908">
    <property type="term" value="F:16S rRNA (adenine(1518)-N(6)/adenine(1519)-N(6))-dimethyltransferase activity"/>
    <property type="evidence" value="ECO:0007669"/>
    <property type="project" value="UniProtKB-EC"/>
</dbReference>
<dbReference type="GO" id="GO:0003723">
    <property type="term" value="F:RNA binding"/>
    <property type="evidence" value="ECO:0007669"/>
    <property type="project" value="UniProtKB-KW"/>
</dbReference>
<dbReference type="CDD" id="cd02440">
    <property type="entry name" value="AdoMet_MTases"/>
    <property type="match status" value="1"/>
</dbReference>
<dbReference type="Gene3D" id="1.10.8.100">
    <property type="entry name" value="Ribosomal RNA adenine dimethylase-like, domain 2"/>
    <property type="match status" value="1"/>
</dbReference>
<dbReference type="Gene3D" id="3.40.50.150">
    <property type="entry name" value="Vaccinia Virus protein VP39"/>
    <property type="match status" value="1"/>
</dbReference>
<dbReference type="HAMAP" id="MF_00607">
    <property type="entry name" value="16SrRNA_methyltr_A"/>
    <property type="match status" value="1"/>
</dbReference>
<dbReference type="InterPro" id="IPR001737">
    <property type="entry name" value="KsgA/Erm"/>
</dbReference>
<dbReference type="InterPro" id="IPR023165">
    <property type="entry name" value="rRNA_Ade_diMease-like_C"/>
</dbReference>
<dbReference type="InterPro" id="IPR020596">
    <property type="entry name" value="rRNA_Ade_Mease_Trfase_CS"/>
</dbReference>
<dbReference type="InterPro" id="IPR020598">
    <property type="entry name" value="rRNA_Ade_methylase_Trfase_N"/>
</dbReference>
<dbReference type="InterPro" id="IPR011530">
    <property type="entry name" value="rRNA_adenine_dimethylase"/>
</dbReference>
<dbReference type="InterPro" id="IPR029063">
    <property type="entry name" value="SAM-dependent_MTases_sf"/>
</dbReference>
<dbReference type="NCBIfam" id="TIGR00755">
    <property type="entry name" value="ksgA"/>
    <property type="match status" value="1"/>
</dbReference>
<dbReference type="PANTHER" id="PTHR11727">
    <property type="entry name" value="DIMETHYLADENOSINE TRANSFERASE"/>
    <property type="match status" value="1"/>
</dbReference>
<dbReference type="PANTHER" id="PTHR11727:SF7">
    <property type="entry name" value="DIMETHYLADENOSINE TRANSFERASE-RELATED"/>
    <property type="match status" value="1"/>
</dbReference>
<dbReference type="Pfam" id="PF00398">
    <property type="entry name" value="RrnaAD"/>
    <property type="match status" value="1"/>
</dbReference>
<dbReference type="SMART" id="SM00650">
    <property type="entry name" value="rADc"/>
    <property type="match status" value="1"/>
</dbReference>
<dbReference type="SUPFAM" id="SSF53335">
    <property type="entry name" value="S-adenosyl-L-methionine-dependent methyltransferases"/>
    <property type="match status" value="1"/>
</dbReference>
<dbReference type="PROSITE" id="PS01131">
    <property type="entry name" value="RRNA_A_DIMETH"/>
    <property type="match status" value="1"/>
</dbReference>
<dbReference type="PROSITE" id="PS51689">
    <property type="entry name" value="SAM_RNA_A_N6_MT"/>
    <property type="match status" value="1"/>
</dbReference>
<proteinExistence type="inferred from homology"/>
<keyword id="KW-0963">Cytoplasm</keyword>
<keyword id="KW-0489">Methyltransferase</keyword>
<keyword id="KW-1185">Reference proteome</keyword>
<keyword id="KW-0694">RNA-binding</keyword>
<keyword id="KW-0698">rRNA processing</keyword>
<keyword id="KW-0949">S-adenosyl-L-methionine</keyword>
<keyword id="KW-0808">Transferase</keyword>
<sequence length="268" mass="30771">MINKINKFFKNNEFSPSKQRGQNFLIDQNIINNVVEAVSKINPSKVLEIGPGLGAISEQLIKRFADNYYAIELDKKLFHHLNERLLKDHILHADALEIDWKSIFDNLGDNPTMVGNLPYNISSKLIKKFILSTYRCAIIMVQKEMGLRLLAKINSKDYSAFSALCQYSLSVSKIIEINETAFIPQPKVRSTLLFLEKKDIAFNEGYEKFLKLIFLSRRKTILNNLKNNYDPKLIIQSLVSLGFKKTSRAQELSPTQLFSLYESLSKLC</sequence>
<gene>
    <name evidence="1" type="primary">rsmA</name>
    <name evidence="1" type="synonym">ksgA</name>
    <name type="ordered locus">MYCGA0100</name>
    <name type="ORF">MGA_0633</name>
</gene>
<protein>
    <recommendedName>
        <fullName evidence="1">Ribosomal RNA small subunit methyltransferase A</fullName>
        <ecNumber evidence="1">2.1.1.182</ecNumber>
    </recommendedName>
    <alternativeName>
        <fullName evidence="1">16S rRNA (adenine(1518)-N(6)/adenine(1519)-N(6))-dimethyltransferase</fullName>
    </alternativeName>
    <alternativeName>
        <fullName evidence="1">16S rRNA dimethyladenosine transferase</fullName>
    </alternativeName>
    <alternativeName>
        <fullName evidence="1">16S rRNA dimethylase</fullName>
    </alternativeName>
    <alternativeName>
        <fullName evidence="1">S-adenosylmethionine-6-N', N'-adenosyl(rRNA) dimethyltransferase</fullName>
    </alternativeName>
</protein>
<comment type="function">
    <text evidence="1">Specifically dimethylates two adjacent adenosines (A1518 and A1519) in the loop of a conserved hairpin near the 3'-end of 16S rRNA in the 30S particle. May play a critical role in biogenesis of 30S subunits.</text>
</comment>
<comment type="catalytic activity">
    <reaction evidence="1">
        <text>adenosine(1518)/adenosine(1519) in 16S rRNA + 4 S-adenosyl-L-methionine = N(6)-dimethyladenosine(1518)/N(6)-dimethyladenosine(1519) in 16S rRNA + 4 S-adenosyl-L-homocysteine + 4 H(+)</text>
        <dbReference type="Rhea" id="RHEA:19609"/>
        <dbReference type="Rhea" id="RHEA-COMP:10232"/>
        <dbReference type="Rhea" id="RHEA-COMP:10233"/>
        <dbReference type="ChEBI" id="CHEBI:15378"/>
        <dbReference type="ChEBI" id="CHEBI:57856"/>
        <dbReference type="ChEBI" id="CHEBI:59789"/>
        <dbReference type="ChEBI" id="CHEBI:74411"/>
        <dbReference type="ChEBI" id="CHEBI:74493"/>
        <dbReference type="EC" id="2.1.1.182"/>
    </reaction>
</comment>
<comment type="subcellular location">
    <subcellularLocation>
        <location evidence="1">Cytoplasm</location>
    </subcellularLocation>
</comment>
<comment type="similarity">
    <text evidence="1">Belongs to the class I-like SAM-binding methyltransferase superfamily. rRNA adenine N(6)-methyltransferase family. RsmA subfamily.</text>
</comment>
<organism>
    <name type="scientific">Mycoplasmoides gallisepticum (strain R(low / passage 15 / clone 2))</name>
    <name type="common">Mycoplasma gallisepticum</name>
    <dbReference type="NCBI Taxonomy" id="710127"/>
    <lineage>
        <taxon>Bacteria</taxon>
        <taxon>Bacillati</taxon>
        <taxon>Mycoplasmatota</taxon>
        <taxon>Mycoplasmoidales</taxon>
        <taxon>Mycoplasmoidaceae</taxon>
        <taxon>Mycoplasmoides</taxon>
    </lineage>
</organism>
<name>RSMA_MYCGA</name>